<sequence>MCCWPLLLLWGLLPGTAAGGSGRTYPHRTLLDSEGKYWLGWSQRGSQIAFRLQVRTAGYVGFGFSPTGAMASADIVVGGVAHGRPYLQDYFTNANRELKKDAQQDYHLEYAMENSTHTIIEFTRELHTCDINDKSITDSTVRVIWAYHHEDAGEAGPKYHDSNRGTKSLRLLNPEKTSVLSTALPYFDLVNQDVPIPNKDTTYWCQMFKIPVFQEKHHVIKVEPVIQRGHESLVHHILLYQCSNNFNDSVLESGHECYHPNMPDAFLTCETVIFAWAIGGEGFSYPPHVGLSLGTPLDPHYVLLEVHYDNPTYEEGLIDNSGLRLFYTMDIRKYDAGVIEAGLWVSLFHTIPPGMPEFQSEGHCTLECLEEALEAEKPSGIHVFAVLLHAHLAGRGIRLRHFRKGKEMKLLAYDDDFDFNFQEFQYLKEEQTILPGDNLITECRYNTKDRAEMTWGGLSTRSEMCLSYLLYYPRINLTRCASIPDIMEQLQFIGVKEIYRPVTTWPFIIKSPKQYKNLSFMDAMNKFKWTKKEGLSFNKLVLSLPVNVRCSKTDNAEWSIQGMTALPPDIERPYKAEPLVCGTSSSSSLHRDFSINLLVCLLLLSCTLSTKSL</sequence>
<evidence type="ECO:0000250" key="1"/>
<evidence type="ECO:0000255" key="2"/>
<evidence type="ECO:0000255" key="3">
    <source>
        <dbReference type="PROSITE-ProRule" id="PRU00246"/>
    </source>
</evidence>
<evidence type="ECO:0000269" key="4">
    <source>
    </source>
</evidence>
<evidence type="ECO:0000269" key="5">
    <source>
    </source>
</evidence>
<evidence type="ECO:0000269" key="6">
    <source>
    </source>
</evidence>
<evidence type="ECO:0000303" key="7">
    <source>
    </source>
</evidence>
<evidence type="ECO:0000305" key="8"/>
<keyword id="KW-0025">Alternative splicing</keyword>
<keyword id="KW-0186">Copper</keyword>
<keyword id="KW-1015">Disulfide bond</keyword>
<keyword id="KW-0256">Endoplasmic reticulum</keyword>
<keyword id="KW-0325">Glycoprotein</keyword>
<keyword id="KW-0472">Membrane</keyword>
<keyword id="KW-0479">Metal-binding</keyword>
<keyword id="KW-0503">Monooxygenase</keyword>
<keyword id="KW-0560">Oxidoreductase</keyword>
<keyword id="KW-1267">Proteomics identification</keyword>
<keyword id="KW-1185">Reference proteome</keyword>
<keyword id="KW-0732">Signal</keyword>
<keyword id="KW-0812">Transmembrane</keyword>
<keyword id="KW-1133">Transmembrane helix</keyword>
<protein>
    <recommendedName>
        <fullName>DBH-like monooxygenase protein 1</fullName>
        <ecNumber>1.14.17.-</ecNumber>
    </recommendedName>
    <alternativeName>
        <fullName>Monooxygenase X</fullName>
    </alternativeName>
</protein>
<proteinExistence type="evidence at protein level"/>
<comment type="cofactor">
    <cofactor evidence="1">
        <name>Cu(2+)</name>
        <dbReference type="ChEBI" id="CHEBI:29036"/>
    </cofactor>
    <text evidence="1">Binds 2 copper ions per subunit.</text>
</comment>
<comment type="interaction">
    <interactant intactId="EBI-7134667">
        <id>Q6UVY6</id>
    </interactant>
    <interactant intactId="EBI-374781">
        <id>O76003</id>
        <label>GLRX3</label>
    </interactant>
    <organismsDiffer>false</organismsDiffer>
    <experiments>7</experiments>
</comment>
<comment type="interaction">
    <interactant intactId="EBI-7134667">
        <id>Q6UVY6</id>
    </interactant>
    <interactant intactId="EBI-720225">
        <id>O43292</id>
        <label>GPAA1</label>
    </interactant>
    <organismsDiffer>false</organismsDiffer>
    <experiments>3</experiments>
</comment>
<comment type="subcellular location">
    <subcellularLocation>
        <location evidence="1">Endoplasmic reticulum membrane</location>
        <topology evidence="1">Single-pass type I membrane protein</topology>
    </subcellularLocation>
</comment>
<comment type="alternative products">
    <event type="alternative splicing"/>
    <isoform>
        <id>Q6UVY6-1</id>
        <name>1</name>
        <name>Long</name>
        <sequence type="displayed"/>
    </isoform>
    <isoform>
        <id>Q6UVY6-2</id>
        <name>2</name>
        <name>Short</name>
        <sequence type="described" ref="VSP_028288 VSP_028289"/>
    </isoform>
</comment>
<comment type="tissue specificity">
    <text evidence="4 6">Highly expressed in lung, kidney, brain and spinal cord.</text>
</comment>
<comment type="developmental stage">
    <text evidence="4">Expressed in fetal liver and fetal brain.</text>
</comment>
<comment type="induction">
    <text evidence="6">By replicative senescence.</text>
</comment>
<comment type="PTM">
    <text evidence="1">N-glycosylated.</text>
</comment>
<comment type="miscellaneous">
    <molecule>Isoform 1</molecule>
    <text>Major.</text>
</comment>
<comment type="similarity">
    <text evidence="8">Belongs to the copper type II ascorbate-dependent monooxygenase family.</text>
</comment>
<comment type="sequence caution" evidence="8">
    <conflict type="erroneous initiation">
        <sequence resource="EMBL-CDS" id="BAC11263"/>
    </conflict>
</comment>
<name>MOXD1_HUMAN</name>
<organism>
    <name type="scientific">Homo sapiens</name>
    <name type="common">Human</name>
    <dbReference type="NCBI Taxonomy" id="9606"/>
    <lineage>
        <taxon>Eukaryota</taxon>
        <taxon>Metazoa</taxon>
        <taxon>Chordata</taxon>
        <taxon>Craniata</taxon>
        <taxon>Vertebrata</taxon>
        <taxon>Euteleostomi</taxon>
        <taxon>Mammalia</taxon>
        <taxon>Eutheria</taxon>
        <taxon>Euarchontoglires</taxon>
        <taxon>Primates</taxon>
        <taxon>Haplorrhini</taxon>
        <taxon>Catarrhini</taxon>
        <taxon>Hominidae</taxon>
        <taxon>Homo</taxon>
    </lineage>
</organism>
<dbReference type="EC" id="1.14.17.-"/>
<dbReference type="EMBL" id="AY007239">
    <property type="protein sequence ID" value="AAG09636.1"/>
    <property type="molecule type" value="mRNA"/>
</dbReference>
<dbReference type="EMBL" id="AY359094">
    <property type="protein sequence ID" value="AAQ89452.1"/>
    <property type="molecule type" value="mRNA"/>
</dbReference>
<dbReference type="EMBL" id="AL357034">
    <property type="status" value="NOT_ANNOTATED_CDS"/>
    <property type="molecule type" value="Genomic_DNA"/>
</dbReference>
<dbReference type="EMBL" id="AL023578">
    <property type="status" value="NOT_ANNOTATED_CDS"/>
    <property type="molecule type" value="Genomic_DNA"/>
</dbReference>
<dbReference type="EMBL" id="CH471051">
    <property type="protein sequence ID" value="EAW48033.1"/>
    <property type="molecule type" value="Genomic_DNA"/>
</dbReference>
<dbReference type="EMBL" id="CH471051">
    <property type="protein sequence ID" value="EAW48034.1"/>
    <property type="molecule type" value="Genomic_DNA"/>
</dbReference>
<dbReference type="EMBL" id="BC018756">
    <property type="protein sequence ID" value="AAH18756.1"/>
    <property type="molecule type" value="mRNA"/>
</dbReference>
<dbReference type="EMBL" id="AK074879">
    <property type="protein sequence ID" value="BAC11263.1"/>
    <property type="status" value="ALT_INIT"/>
    <property type="molecule type" value="mRNA"/>
</dbReference>
<dbReference type="EMBL" id="AL080058">
    <property type="protein sequence ID" value="CAB45692.1"/>
    <property type="molecule type" value="mRNA"/>
</dbReference>
<dbReference type="CCDS" id="CCDS5152.2">
    <molecule id="Q6UVY6-1"/>
</dbReference>
<dbReference type="PIR" id="T12460">
    <property type="entry name" value="T12460"/>
</dbReference>
<dbReference type="RefSeq" id="NP_056344.2">
    <molecule id="Q6UVY6-1"/>
    <property type="nucleotide sequence ID" value="NM_015529.4"/>
</dbReference>
<dbReference type="SMR" id="Q6UVY6"/>
<dbReference type="BioGRID" id="117478">
    <property type="interactions" value="48"/>
</dbReference>
<dbReference type="FunCoup" id="Q6UVY6">
    <property type="interactions" value="433"/>
</dbReference>
<dbReference type="IntAct" id="Q6UVY6">
    <property type="interactions" value="28"/>
</dbReference>
<dbReference type="MINT" id="Q6UVY6"/>
<dbReference type="STRING" id="9606.ENSP00000356940"/>
<dbReference type="GlyCosmos" id="Q6UVY6">
    <property type="glycosylation" value="4 sites, No reported glycans"/>
</dbReference>
<dbReference type="GlyGen" id="Q6UVY6">
    <property type="glycosylation" value="4 sites, 35 N-linked glycans (2 sites)"/>
</dbReference>
<dbReference type="iPTMnet" id="Q6UVY6"/>
<dbReference type="PhosphoSitePlus" id="Q6UVY6"/>
<dbReference type="SwissPalm" id="Q6UVY6"/>
<dbReference type="BioMuta" id="MOXD1"/>
<dbReference type="DMDM" id="74749373"/>
<dbReference type="jPOST" id="Q6UVY6"/>
<dbReference type="MassIVE" id="Q6UVY6"/>
<dbReference type="PaxDb" id="9606-ENSP00000356940"/>
<dbReference type="PeptideAtlas" id="Q6UVY6"/>
<dbReference type="ProteomicsDB" id="67438">
    <molecule id="Q6UVY6-1"/>
</dbReference>
<dbReference type="ProteomicsDB" id="67439">
    <molecule id="Q6UVY6-2"/>
</dbReference>
<dbReference type="Pumba" id="Q6UVY6"/>
<dbReference type="Antibodypedia" id="32922">
    <property type="antibodies" value="140 antibodies from 22 providers"/>
</dbReference>
<dbReference type="DNASU" id="26002"/>
<dbReference type="Ensembl" id="ENST00000336749.3">
    <molecule id="Q6UVY6-2"/>
    <property type="protein sequence ID" value="ENSP00000336998.3"/>
    <property type="gene ID" value="ENSG00000079931.15"/>
</dbReference>
<dbReference type="Ensembl" id="ENST00000367963.8">
    <molecule id="Q6UVY6-1"/>
    <property type="protein sequence ID" value="ENSP00000356940.3"/>
    <property type="gene ID" value="ENSG00000079931.15"/>
</dbReference>
<dbReference type="GeneID" id="26002"/>
<dbReference type="KEGG" id="hsa:26002"/>
<dbReference type="MANE-Select" id="ENST00000367963.8">
    <property type="protein sequence ID" value="ENSP00000356940.3"/>
    <property type="RefSeq nucleotide sequence ID" value="NM_015529.4"/>
    <property type="RefSeq protein sequence ID" value="NP_056344.2"/>
</dbReference>
<dbReference type="UCSC" id="uc003qde.4">
    <molecule id="Q6UVY6-1"/>
    <property type="organism name" value="human"/>
</dbReference>
<dbReference type="AGR" id="HGNC:21063"/>
<dbReference type="CTD" id="26002"/>
<dbReference type="DisGeNET" id="26002"/>
<dbReference type="GeneCards" id="MOXD1"/>
<dbReference type="HGNC" id="HGNC:21063">
    <property type="gene designation" value="MOXD1"/>
</dbReference>
<dbReference type="HPA" id="ENSG00000079931">
    <property type="expression patterns" value="Tissue enhanced (endometrium, smooth muscle)"/>
</dbReference>
<dbReference type="MIM" id="609000">
    <property type="type" value="gene"/>
</dbReference>
<dbReference type="neXtProt" id="NX_Q6UVY6"/>
<dbReference type="OpenTargets" id="ENSG00000079931"/>
<dbReference type="PharmGKB" id="PA134979178"/>
<dbReference type="VEuPathDB" id="HostDB:ENSG00000079931"/>
<dbReference type="eggNOG" id="KOG3568">
    <property type="taxonomic scope" value="Eukaryota"/>
</dbReference>
<dbReference type="GeneTree" id="ENSGT00530000063085"/>
<dbReference type="HOGENOM" id="CLU_017939_4_1_1"/>
<dbReference type="InParanoid" id="Q6UVY6"/>
<dbReference type="OMA" id="MITGKHM"/>
<dbReference type="OrthoDB" id="10003276at2759"/>
<dbReference type="PAN-GO" id="Q6UVY6">
    <property type="GO annotations" value="7 GO annotations based on evolutionary models"/>
</dbReference>
<dbReference type="PhylomeDB" id="Q6UVY6"/>
<dbReference type="TreeFam" id="TF320698"/>
<dbReference type="PathwayCommons" id="Q6UVY6"/>
<dbReference type="SignaLink" id="Q6UVY6"/>
<dbReference type="BioGRID-ORCS" id="26002">
    <property type="hits" value="12 hits in 1154 CRISPR screens"/>
</dbReference>
<dbReference type="ChiTaRS" id="MOXD1">
    <property type="organism name" value="human"/>
</dbReference>
<dbReference type="GeneWiki" id="Monooxygenase_DBH-like_1"/>
<dbReference type="GenomeRNAi" id="26002"/>
<dbReference type="Pharos" id="Q6UVY6">
    <property type="development level" value="Tbio"/>
</dbReference>
<dbReference type="PRO" id="PR:Q6UVY6"/>
<dbReference type="Proteomes" id="UP000005640">
    <property type="component" value="Chromosome 6"/>
</dbReference>
<dbReference type="RNAct" id="Q6UVY6">
    <property type="molecule type" value="protein"/>
</dbReference>
<dbReference type="Bgee" id="ENSG00000079931">
    <property type="expression patterns" value="Expressed in ventricular zone and 156 other cell types or tissues"/>
</dbReference>
<dbReference type="ExpressionAtlas" id="Q6UVY6">
    <property type="expression patterns" value="baseline and differential"/>
</dbReference>
<dbReference type="GO" id="GO:0005789">
    <property type="term" value="C:endoplasmic reticulum membrane"/>
    <property type="evidence" value="ECO:0000314"/>
    <property type="project" value="CACAO"/>
</dbReference>
<dbReference type="GO" id="GO:0005615">
    <property type="term" value="C:extracellular space"/>
    <property type="evidence" value="ECO:0000318"/>
    <property type="project" value="GO_Central"/>
</dbReference>
<dbReference type="GO" id="GO:0030667">
    <property type="term" value="C:secretory granule membrane"/>
    <property type="evidence" value="ECO:0000318"/>
    <property type="project" value="GO_Central"/>
</dbReference>
<dbReference type="GO" id="GO:0005507">
    <property type="term" value="F:copper ion binding"/>
    <property type="evidence" value="ECO:0000318"/>
    <property type="project" value="GO_Central"/>
</dbReference>
<dbReference type="GO" id="GO:0004500">
    <property type="term" value="F:dopamine beta-monooxygenase activity"/>
    <property type="evidence" value="ECO:0000318"/>
    <property type="project" value="GO_Central"/>
</dbReference>
<dbReference type="GO" id="GO:0042420">
    <property type="term" value="P:dopamine catabolic process"/>
    <property type="evidence" value="ECO:0000318"/>
    <property type="project" value="GO_Central"/>
</dbReference>
<dbReference type="GO" id="GO:0042421">
    <property type="term" value="P:norepinephrine biosynthetic process"/>
    <property type="evidence" value="ECO:0000318"/>
    <property type="project" value="GO_Central"/>
</dbReference>
<dbReference type="GO" id="GO:0006589">
    <property type="term" value="P:octopamine biosynthetic process"/>
    <property type="evidence" value="ECO:0000318"/>
    <property type="project" value="GO_Central"/>
</dbReference>
<dbReference type="CDD" id="cd09631">
    <property type="entry name" value="DOMON_DOH"/>
    <property type="match status" value="1"/>
</dbReference>
<dbReference type="FunFam" id="2.60.120.310:FF:000002">
    <property type="entry name" value="DBH-like monooxygenase protein 1"/>
    <property type="match status" value="1"/>
</dbReference>
<dbReference type="FunFam" id="2.60.120.230:FF:000001">
    <property type="entry name" value="Monooxygenase, DBH-like 1"/>
    <property type="match status" value="1"/>
</dbReference>
<dbReference type="Gene3D" id="2.60.120.230">
    <property type="match status" value="1"/>
</dbReference>
<dbReference type="Gene3D" id="2.60.120.310">
    <property type="entry name" value="Copper type II, ascorbate-dependent monooxygenase, N-terminal domain"/>
    <property type="match status" value="1"/>
</dbReference>
<dbReference type="InterPro" id="IPR014784">
    <property type="entry name" value="Cu2_ascorb_mOase-like_C"/>
</dbReference>
<dbReference type="InterPro" id="IPR000323">
    <property type="entry name" value="Cu2_ascorb_mOase_N"/>
</dbReference>
<dbReference type="InterPro" id="IPR036939">
    <property type="entry name" value="Cu2_ascorb_mOase_N_sf"/>
</dbReference>
<dbReference type="InterPro" id="IPR024548">
    <property type="entry name" value="Cu2_monoox_C"/>
</dbReference>
<dbReference type="InterPro" id="IPR000945">
    <property type="entry name" value="DBH-like"/>
</dbReference>
<dbReference type="InterPro" id="IPR045266">
    <property type="entry name" value="DOH_DOMON"/>
</dbReference>
<dbReference type="InterPro" id="IPR005018">
    <property type="entry name" value="DOMON_domain"/>
</dbReference>
<dbReference type="InterPro" id="IPR008977">
    <property type="entry name" value="PHM/PNGase_F_dom_sf"/>
</dbReference>
<dbReference type="InterPro" id="IPR028460">
    <property type="entry name" value="Tbh/DBH"/>
</dbReference>
<dbReference type="PANTHER" id="PTHR10157:SF28">
    <property type="entry name" value="DBH-LIKE MONOOXYGENASE PROTEIN 1"/>
    <property type="match status" value="1"/>
</dbReference>
<dbReference type="PANTHER" id="PTHR10157">
    <property type="entry name" value="DOPAMINE BETA HYDROXYLASE RELATED"/>
    <property type="match status" value="1"/>
</dbReference>
<dbReference type="Pfam" id="PF03712">
    <property type="entry name" value="Cu2_monoox_C"/>
    <property type="match status" value="1"/>
</dbReference>
<dbReference type="Pfam" id="PF01082">
    <property type="entry name" value="Cu2_monooxygen"/>
    <property type="match status" value="1"/>
</dbReference>
<dbReference type="Pfam" id="PF03351">
    <property type="entry name" value="DOMON"/>
    <property type="match status" value="1"/>
</dbReference>
<dbReference type="PRINTS" id="PR00767">
    <property type="entry name" value="DBMONOXGNASE"/>
</dbReference>
<dbReference type="SMART" id="SM00664">
    <property type="entry name" value="DoH"/>
    <property type="match status" value="1"/>
</dbReference>
<dbReference type="SUPFAM" id="SSF49742">
    <property type="entry name" value="PHM/PNGase F"/>
    <property type="match status" value="2"/>
</dbReference>
<dbReference type="PROSITE" id="PS50836">
    <property type="entry name" value="DOMON"/>
    <property type="match status" value="1"/>
</dbReference>
<gene>
    <name type="primary">MOXD1</name>
    <name type="synonym">MOX</name>
    <name type="ORF">UNQ2493/PRO5780</name>
</gene>
<feature type="signal peptide" evidence="2">
    <location>
        <begin position="1"/>
        <end position="19"/>
    </location>
</feature>
<feature type="chain" id="PRO_0000305217" description="DBH-like monooxygenase protein 1">
    <location>
        <begin position="20"/>
        <end position="613"/>
    </location>
</feature>
<feature type="topological domain" description="Lumenal" evidence="2">
    <location>
        <begin position="20"/>
        <end position="592"/>
    </location>
</feature>
<feature type="transmembrane region" description="Helical" evidence="2">
    <location>
        <begin position="593"/>
        <end position="613"/>
    </location>
</feature>
<feature type="domain" description="DOMON" evidence="3">
    <location>
        <begin position="35"/>
        <end position="148"/>
    </location>
</feature>
<feature type="active site" evidence="2">
    <location>
        <position position="203"/>
    </location>
</feature>
<feature type="active site" evidence="2">
    <location>
        <position position="389"/>
    </location>
</feature>
<feature type="binding site" evidence="1">
    <location>
        <position position="235"/>
    </location>
    <ligand>
        <name>Cu cation</name>
        <dbReference type="ChEBI" id="CHEBI:23378"/>
        <label>A</label>
    </ligand>
</feature>
<feature type="binding site" evidence="1">
    <location>
        <position position="236"/>
    </location>
    <ligand>
        <name>Cu cation</name>
        <dbReference type="ChEBI" id="CHEBI:23378"/>
        <label>A</label>
    </ligand>
</feature>
<feature type="binding site" evidence="1">
    <location>
        <position position="307"/>
    </location>
    <ligand>
        <name>Cu cation</name>
        <dbReference type="ChEBI" id="CHEBI:23378"/>
        <label>A</label>
    </ligand>
</feature>
<feature type="binding site" evidence="1">
    <location>
        <position position="389"/>
    </location>
    <ligand>
        <name>Cu cation</name>
        <dbReference type="ChEBI" id="CHEBI:23378"/>
        <label>B</label>
    </ligand>
</feature>
<feature type="binding site" evidence="1">
    <location>
        <position position="391"/>
    </location>
    <ligand>
        <name>Cu cation</name>
        <dbReference type="ChEBI" id="CHEBI:23378"/>
        <label>B</label>
    </ligand>
</feature>
<feature type="binding site" evidence="1">
    <location>
        <position position="464"/>
    </location>
    <ligand>
        <name>Cu cation</name>
        <dbReference type="ChEBI" id="CHEBI:23378"/>
        <label>B</label>
    </ligand>
</feature>
<feature type="glycosylation site" description="N-linked (GlcNAc...) asparagine" evidence="2">
    <location>
        <position position="114"/>
    </location>
</feature>
<feature type="glycosylation site" description="N-linked (GlcNAc...) asparagine" evidence="2">
    <location>
        <position position="247"/>
    </location>
</feature>
<feature type="glycosylation site" description="N-linked (GlcNAc...) asparagine" evidence="2">
    <location>
        <position position="476"/>
    </location>
</feature>
<feature type="glycosylation site" description="N-linked (GlcNAc...) asparagine" evidence="2">
    <location>
        <position position="517"/>
    </location>
</feature>
<feature type="disulfide bond" evidence="1">
    <location>
        <begin position="205"/>
        <end position="257"/>
    </location>
</feature>
<feature type="disulfide bond" evidence="1">
    <location>
        <begin position="242"/>
        <end position="269"/>
    </location>
</feature>
<feature type="disulfide bond" evidence="1">
    <location>
        <begin position="364"/>
        <end position="480"/>
    </location>
</feature>
<feature type="disulfide bond" evidence="1">
    <location>
        <begin position="368"/>
        <end position="550"/>
    </location>
</feature>
<feature type="disulfide bond" evidence="1">
    <location>
        <begin position="443"/>
        <end position="465"/>
    </location>
</feature>
<feature type="splice variant" id="VSP_028288" description="In isoform 2." evidence="7">
    <location>
        <begin position="1"/>
        <end position="26"/>
    </location>
</feature>
<feature type="splice variant" id="VSP_028289" description="In isoform 2." evidence="7">
    <original>HRTLLDSEGKYWLGWSQRGSQIAFRLQVRTAGYVGFGFSPTGAMASADIVVGGVAHGRPYL</original>
    <variation>MNSFLSVFRYPDFSFPYFP</variation>
    <location>
        <begin position="27"/>
        <end position="87"/>
    </location>
</feature>
<feature type="sequence variant" id="VAR_035185" description="In dbSNP:rs36075540.">
    <original>E</original>
    <variation>Q</variation>
    <location>
        <position position="488"/>
    </location>
</feature>
<feature type="sequence variant" id="VAR_035186" description="In dbSNP:rs17851680." evidence="5">
    <original>K</original>
    <variation>E</variation>
    <location>
        <position position="539"/>
    </location>
</feature>
<feature type="sequence conflict" description="In Ref. 6; BAC11263." evidence="8" ref="6">
    <original>H</original>
    <variation>Y</variation>
    <location>
        <position position="148"/>
    </location>
</feature>
<feature type="sequence conflict" description="In Ref. 7; CAB45692." evidence="8" ref="7">
    <original>N</original>
    <variation>Y</variation>
    <location>
        <position position="438"/>
    </location>
</feature>
<feature type="sequence conflict" description="In Ref. 1; AAG09636." evidence="8" ref="1">
    <original>P</original>
    <variation>L</variation>
    <location>
        <position position="512"/>
    </location>
</feature>
<accession>Q6UVY6</accession>
<accession>Q5THU6</accession>
<accession>Q8NC97</accession>
<accession>Q8WV49</accession>
<accession>Q9H4M6</accession>
<accession>Q9Y4U3</accession>
<reference key="1">
    <citation type="journal article" date="1998" name="Gene">
        <title>Identification and cloning of a sequence homologue of dopamine beta-hydroxylase.</title>
        <authorList>
            <person name="Chambers K.J."/>
            <person name="Tonkin L.A."/>
            <person name="Chang E."/>
            <person name="Shelton D.N."/>
            <person name="Linskens M.H."/>
            <person name="Funk W.D."/>
        </authorList>
    </citation>
    <scope>NUCLEOTIDE SEQUENCE [MRNA] (ISOFORM 2)</scope>
    <scope>TISSUE SPECIFICITY</scope>
    <scope>INDUCTION</scope>
    <source>
        <tissue>Fibroblast</tissue>
    </source>
</reference>
<reference key="2">
    <citation type="journal article" date="2003" name="Genome Res.">
        <title>The secreted protein discovery initiative (SPDI), a large-scale effort to identify novel human secreted and transmembrane proteins: a bioinformatics assessment.</title>
        <authorList>
            <person name="Clark H.F."/>
            <person name="Gurney A.L."/>
            <person name="Abaya E."/>
            <person name="Baker K."/>
            <person name="Baldwin D.T."/>
            <person name="Brush J."/>
            <person name="Chen J."/>
            <person name="Chow B."/>
            <person name="Chui C."/>
            <person name="Crowley C."/>
            <person name="Currell B."/>
            <person name="Deuel B."/>
            <person name="Dowd P."/>
            <person name="Eaton D."/>
            <person name="Foster J.S."/>
            <person name="Grimaldi C."/>
            <person name="Gu Q."/>
            <person name="Hass P.E."/>
            <person name="Heldens S."/>
            <person name="Huang A."/>
            <person name="Kim H.S."/>
            <person name="Klimowski L."/>
            <person name="Jin Y."/>
            <person name="Johnson S."/>
            <person name="Lee J."/>
            <person name="Lewis L."/>
            <person name="Liao D."/>
            <person name="Mark M.R."/>
            <person name="Robbie E."/>
            <person name="Sanchez C."/>
            <person name="Schoenfeld J."/>
            <person name="Seshagiri S."/>
            <person name="Simmons L."/>
            <person name="Singh J."/>
            <person name="Smith V."/>
            <person name="Stinson J."/>
            <person name="Vagts A."/>
            <person name="Vandlen R.L."/>
            <person name="Watanabe C."/>
            <person name="Wieand D."/>
            <person name="Woods K."/>
            <person name="Xie M.-H."/>
            <person name="Yansura D.G."/>
            <person name="Yi S."/>
            <person name="Yu G."/>
            <person name="Yuan J."/>
            <person name="Zhang M."/>
            <person name="Zhang Z."/>
            <person name="Goddard A.D."/>
            <person name="Wood W.I."/>
            <person name="Godowski P.J."/>
            <person name="Gray A.M."/>
        </authorList>
    </citation>
    <scope>NUCLEOTIDE SEQUENCE [LARGE SCALE MRNA] (ISOFORM 1)</scope>
</reference>
<reference key="3">
    <citation type="journal article" date="2003" name="Nature">
        <title>The DNA sequence and analysis of human chromosome 6.</title>
        <authorList>
            <person name="Mungall A.J."/>
            <person name="Palmer S.A."/>
            <person name="Sims S.K."/>
            <person name="Edwards C.A."/>
            <person name="Ashurst J.L."/>
            <person name="Wilming L."/>
            <person name="Jones M.C."/>
            <person name="Horton R."/>
            <person name="Hunt S.E."/>
            <person name="Scott C.E."/>
            <person name="Gilbert J.G.R."/>
            <person name="Clamp M.E."/>
            <person name="Bethel G."/>
            <person name="Milne S."/>
            <person name="Ainscough R."/>
            <person name="Almeida J.P."/>
            <person name="Ambrose K.D."/>
            <person name="Andrews T.D."/>
            <person name="Ashwell R.I.S."/>
            <person name="Babbage A.K."/>
            <person name="Bagguley C.L."/>
            <person name="Bailey J."/>
            <person name="Banerjee R."/>
            <person name="Barker D.J."/>
            <person name="Barlow K.F."/>
            <person name="Bates K."/>
            <person name="Beare D.M."/>
            <person name="Beasley H."/>
            <person name="Beasley O."/>
            <person name="Bird C.P."/>
            <person name="Blakey S.E."/>
            <person name="Bray-Allen S."/>
            <person name="Brook J."/>
            <person name="Brown A.J."/>
            <person name="Brown J.Y."/>
            <person name="Burford D.C."/>
            <person name="Burrill W."/>
            <person name="Burton J."/>
            <person name="Carder C."/>
            <person name="Carter N.P."/>
            <person name="Chapman J.C."/>
            <person name="Clark S.Y."/>
            <person name="Clark G."/>
            <person name="Clee C.M."/>
            <person name="Clegg S."/>
            <person name="Cobley V."/>
            <person name="Collier R.E."/>
            <person name="Collins J.E."/>
            <person name="Colman L.K."/>
            <person name="Corby N.R."/>
            <person name="Coville G.J."/>
            <person name="Culley K.M."/>
            <person name="Dhami P."/>
            <person name="Davies J."/>
            <person name="Dunn M."/>
            <person name="Earthrowl M.E."/>
            <person name="Ellington A.E."/>
            <person name="Evans K.A."/>
            <person name="Faulkner L."/>
            <person name="Francis M.D."/>
            <person name="Frankish A."/>
            <person name="Frankland J."/>
            <person name="French L."/>
            <person name="Garner P."/>
            <person name="Garnett J."/>
            <person name="Ghori M.J."/>
            <person name="Gilby L.M."/>
            <person name="Gillson C.J."/>
            <person name="Glithero R.J."/>
            <person name="Grafham D.V."/>
            <person name="Grant M."/>
            <person name="Gribble S."/>
            <person name="Griffiths C."/>
            <person name="Griffiths M.N.D."/>
            <person name="Hall R."/>
            <person name="Halls K.S."/>
            <person name="Hammond S."/>
            <person name="Harley J.L."/>
            <person name="Hart E.A."/>
            <person name="Heath P.D."/>
            <person name="Heathcott R."/>
            <person name="Holmes S.J."/>
            <person name="Howden P.J."/>
            <person name="Howe K.L."/>
            <person name="Howell G.R."/>
            <person name="Huckle E."/>
            <person name="Humphray S.J."/>
            <person name="Humphries M.D."/>
            <person name="Hunt A.R."/>
            <person name="Johnson C.M."/>
            <person name="Joy A.A."/>
            <person name="Kay M."/>
            <person name="Keenan S.J."/>
            <person name="Kimberley A.M."/>
            <person name="King A."/>
            <person name="Laird G.K."/>
            <person name="Langford C."/>
            <person name="Lawlor S."/>
            <person name="Leongamornlert D.A."/>
            <person name="Leversha M."/>
            <person name="Lloyd C.R."/>
            <person name="Lloyd D.M."/>
            <person name="Loveland J.E."/>
            <person name="Lovell J."/>
            <person name="Martin S."/>
            <person name="Mashreghi-Mohammadi M."/>
            <person name="Maslen G.L."/>
            <person name="Matthews L."/>
            <person name="McCann O.T."/>
            <person name="McLaren S.J."/>
            <person name="McLay K."/>
            <person name="McMurray A."/>
            <person name="Moore M.J.F."/>
            <person name="Mullikin J.C."/>
            <person name="Niblett D."/>
            <person name="Nickerson T."/>
            <person name="Novik K.L."/>
            <person name="Oliver K."/>
            <person name="Overton-Larty E.K."/>
            <person name="Parker A."/>
            <person name="Patel R."/>
            <person name="Pearce A.V."/>
            <person name="Peck A.I."/>
            <person name="Phillimore B.J.C.T."/>
            <person name="Phillips S."/>
            <person name="Plumb R.W."/>
            <person name="Porter K.M."/>
            <person name="Ramsey Y."/>
            <person name="Ranby S.A."/>
            <person name="Rice C.M."/>
            <person name="Ross M.T."/>
            <person name="Searle S.M."/>
            <person name="Sehra H.K."/>
            <person name="Sheridan E."/>
            <person name="Skuce C.D."/>
            <person name="Smith S."/>
            <person name="Smith M."/>
            <person name="Spraggon L."/>
            <person name="Squares S.L."/>
            <person name="Steward C.A."/>
            <person name="Sycamore N."/>
            <person name="Tamlyn-Hall G."/>
            <person name="Tester J."/>
            <person name="Theaker A.J."/>
            <person name="Thomas D.W."/>
            <person name="Thorpe A."/>
            <person name="Tracey A."/>
            <person name="Tromans A."/>
            <person name="Tubby B."/>
            <person name="Wall M."/>
            <person name="Wallis J.M."/>
            <person name="West A.P."/>
            <person name="White S.S."/>
            <person name="Whitehead S.L."/>
            <person name="Whittaker H."/>
            <person name="Wild A."/>
            <person name="Willey D.J."/>
            <person name="Wilmer T.E."/>
            <person name="Wood J.M."/>
            <person name="Wray P.W."/>
            <person name="Wyatt J.C."/>
            <person name="Young L."/>
            <person name="Younger R.M."/>
            <person name="Bentley D.R."/>
            <person name="Coulson A."/>
            <person name="Durbin R.M."/>
            <person name="Hubbard T."/>
            <person name="Sulston J.E."/>
            <person name="Dunham I."/>
            <person name="Rogers J."/>
            <person name="Beck S."/>
        </authorList>
    </citation>
    <scope>NUCLEOTIDE SEQUENCE [LARGE SCALE GENOMIC DNA]</scope>
</reference>
<reference key="4">
    <citation type="submission" date="2005-09" db="EMBL/GenBank/DDBJ databases">
        <authorList>
            <person name="Mural R.J."/>
            <person name="Istrail S."/>
            <person name="Sutton G.G."/>
            <person name="Florea L."/>
            <person name="Halpern A.L."/>
            <person name="Mobarry C.M."/>
            <person name="Lippert R."/>
            <person name="Walenz B."/>
            <person name="Shatkay H."/>
            <person name="Dew I."/>
            <person name="Miller J.R."/>
            <person name="Flanigan M.J."/>
            <person name="Edwards N.J."/>
            <person name="Bolanos R."/>
            <person name="Fasulo D."/>
            <person name="Halldorsson B.V."/>
            <person name="Hannenhalli S."/>
            <person name="Turner R."/>
            <person name="Yooseph S."/>
            <person name="Lu F."/>
            <person name="Nusskern D.R."/>
            <person name="Shue B.C."/>
            <person name="Zheng X.H."/>
            <person name="Zhong F."/>
            <person name="Delcher A.L."/>
            <person name="Huson D.H."/>
            <person name="Kravitz S.A."/>
            <person name="Mouchard L."/>
            <person name="Reinert K."/>
            <person name="Remington K.A."/>
            <person name="Clark A.G."/>
            <person name="Waterman M.S."/>
            <person name="Eichler E.E."/>
            <person name="Adams M.D."/>
            <person name="Hunkapiller M.W."/>
            <person name="Myers E.W."/>
            <person name="Venter J.C."/>
        </authorList>
    </citation>
    <scope>NUCLEOTIDE SEQUENCE [LARGE SCALE GENOMIC DNA]</scope>
</reference>
<reference key="5">
    <citation type="journal article" date="2004" name="Genome Res.">
        <title>The status, quality, and expansion of the NIH full-length cDNA project: the Mammalian Gene Collection (MGC).</title>
        <authorList>
            <consortium name="The MGC Project Team"/>
        </authorList>
    </citation>
    <scope>NUCLEOTIDE SEQUENCE [LARGE SCALE MRNA] (ISOFORM 1)</scope>
    <scope>VARIANT GLU-539</scope>
    <source>
        <tissue>Skin</tissue>
    </source>
</reference>
<reference key="6">
    <citation type="journal article" date="2004" name="Nat. Genet.">
        <title>Complete sequencing and characterization of 21,243 full-length human cDNAs.</title>
        <authorList>
            <person name="Ota T."/>
            <person name="Suzuki Y."/>
            <person name="Nishikawa T."/>
            <person name="Otsuki T."/>
            <person name="Sugiyama T."/>
            <person name="Irie R."/>
            <person name="Wakamatsu A."/>
            <person name="Hayashi K."/>
            <person name="Sato H."/>
            <person name="Nagai K."/>
            <person name="Kimura K."/>
            <person name="Makita H."/>
            <person name="Sekine M."/>
            <person name="Obayashi M."/>
            <person name="Nishi T."/>
            <person name="Shibahara T."/>
            <person name="Tanaka T."/>
            <person name="Ishii S."/>
            <person name="Yamamoto J."/>
            <person name="Saito K."/>
            <person name="Kawai Y."/>
            <person name="Isono Y."/>
            <person name="Nakamura Y."/>
            <person name="Nagahari K."/>
            <person name="Murakami K."/>
            <person name="Yasuda T."/>
            <person name="Iwayanagi T."/>
            <person name="Wagatsuma M."/>
            <person name="Shiratori A."/>
            <person name="Sudo H."/>
            <person name="Hosoiri T."/>
            <person name="Kaku Y."/>
            <person name="Kodaira H."/>
            <person name="Kondo H."/>
            <person name="Sugawara M."/>
            <person name="Takahashi M."/>
            <person name="Kanda K."/>
            <person name="Yokoi T."/>
            <person name="Furuya T."/>
            <person name="Kikkawa E."/>
            <person name="Omura Y."/>
            <person name="Abe K."/>
            <person name="Kamihara K."/>
            <person name="Katsuta N."/>
            <person name="Sato K."/>
            <person name="Tanikawa M."/>
            <person name="Yamazaki M."/>
            <person name="Ninomiya K."/>
            <person name="Ishibashi T."/>
            <person name="Yamashita H."/>
            <person name="Murakawa K."/>
            <person name="Fujimori K."/>
            <person name="Tanai H."/>
            <person name="Kimata M."/>
            <person name="Watanabe M."/>
            <person name="Hiraoka S."/>
            <person name="Chiba Y."/>
            <person name="Ishida S."/>
            <person name="Ono Y."/>
            <person name="Takiguchi S."/>
            <person name="Watanabe S."/>
            <person name="Yosida M."/>
            <person name="Hotuta T."/>
            <person name="Kusano J."/>
            <person name="Kanehori K."/>
            <person name="Takahashi-Fujii A."/>
            <person name="Hara H."/>
            <person name="Tanase T.-O."/>
            <person name="Nomura Y."/>
            <person name="Togiya S."/>
            <person name="Komai F."/>
            <person name="Hara R."/>
            <person name="Takeuchi K."/>
            <person name="Arita M."/>
            <person name="Imose N."/>
            <person name="Musashino K."/>
            <person name="Yuuki H."/>
            <person name="Oshima A."/>
            <person name="Sasaki N."/>
            <person name="Aotsuka S."/>
            <person name="Yoshikawa Y."/>
            <person name="Matsunawa H."/>
            <person name="Ichihara T."/>
            <person name="Shiohata N."/>
            <person name="Sano S."/>
            <person name="Moriya S."/>
            <person name="Momiyama H."/>
            <person name="Satoh N."/>
            <person name="Takami S."/>
            <person name="Terashima Y."/>
            <person name="Suzuki O."/>
            <person name="Nakagawa S."/>
            <person name="Senoh A."/>
            <person name="Mizoguchi H."/>
            <person name="Goto Y."/>
            <person name="Shimizu F."/>
            <person name="Wakebe H."/>
            <person name="Hishigaki H."/>
            <person name="Watanabe T."/>
            <person name="Sugiyama A."/>
            <person name="Takemoto M."/>
            <person name="Kawakami B."/>
            <person name="Yamazaki M."/>
            <person name="Watanabe K."/>
            <person name="Kumagai A."/>
            <person name="Itakura S."/>
            <person name="Fukuzumi Y."/>
            <person name="Fujimori Y."/>
            <person name="Komiyama M."/>
            <person name="Tashiro H."/>
            <person name="Tanigami A."/>
            <person name="Fujiwara T."/>
            <person name="Ono T."/>
            <person name="Yamada K."/>
            <person name="Fujii Y."/>
            <person name="Ozaki K."/>
            <person name="Hirao M."/>
            <person name="Ohmori Y."/>
            <person name="Kawabata A."/>
            <person name="Hikiji T."/>
            <person name="Kobatake N."/>
            <person name="Inagaki H."/>
            <person name="Ikema Y."/>
            <person name="Okamoto S."/>
            <person name="Okitani R."/>
            <person name="Kawakami T."/>
            <person name="Noguchi S."/>
            <person name="Itoh T."/>
            <person name="Shigeta K."/>
            <person name="Senba T."/>
            <person name="Matsumura K."/>
            <person name="Nakajima Y."/>
            <person name="Mizuno T."/>
            <person name="Morinaga M."/>
            <person name="Sasaki M."/>
            <person name="Togashi T."/>
            <person name="Oyama M."/>
            <person name="Hata H."/>
            <person name="Watanabe M."/>
            <person name="Komatsu T."/>
            <person name="Mizushima-Sugano J."/>
            <person name="Satoh T."/>
            <person name="Shirai Y."/>
            <person name="Takahashi Y."/>
            <person name="Nakagawa K."/>
            <person name="Okumura K."/>
            <person name="Nagase T."/>
            <person name="Nomura N."/>
            <person name="Kikuchi H."/>
            <person name="Masuho Y."/>
            <person name="Yamashita R."/>
            <person name="Nakai K."/>
            <person name="Yada T."/>
            <person name="Nakamura Y."/>
            <person name="Ohara O."/>
            <person name="Isogai T."/>
            <person name="Sugano S."/>
        </authorList>
    </citation>
    <scope>NUCLEOTIDE SEQUENCE [LARGE SCALE MRNA] OF 60-613 (ISOFORM 1)</scope>
</reference>
<reference key="7">
    <citation type="journal article" date="2007" name="BMC Genomics">
        <title>The full-ORF clone resource of the German cDNA consortium.</title>
        <authorList>
            <person name="Bechtel S."/>
            <person name="Rosenfelder H."/>
            <person name="Duda A."/>
            <person name="Schmidt C.P."/>
            <person name="Ernst U."/>
            <person name="Wellenreuther R."/>
            <person name="Mehrle A."/>
            <person name="Schuster C."/>
            <person name="Bahr A."/>
            <person name="Bloecker H."/>
            <person name="Heubner D."/>
            <person name="Hoerlein A."/>
            <person name="Michel G."/>
            <person name="Wedler H."/>
            <person name="Koehrer K."/>
            <person name="Ottenwaelder B."/>
            <person name="Poustka A."/>
            <person name="Wiemann S."/>
            <person name="Schupp I."/>
        </authorList>
    </citation>
    <scope>NUCLEOTIDE SEQUENCE [LARGE SCALE MRNA] OF 279-613</scope>
    <source>
        <tissue>Brain</tissue>
    </source>
</reference>
<reference key="8">
    <citation type="journal article" date="2004" name="J. Biol. Chem.">
        <title>Monooxygenase X, a member of the copper-dependent monooxygenase family localized to the endoplasmic reticulum.</title>
        <authorList>
            <person name="Xin X."/>
            <person name="Mains R.E."/>
            <person name="Eipper B.A."/>
        </authorList>
    </citation>
    <scope>IDENTIFICATION</scope>
    <scope>ALTERNATIVE SPLICING (ISOFORMS 1 AND 2)</scope>
    <scope>TISSUE SPECIFICITY</scope>
    <scope>DEVELOPMENTAL STAGE</scope>
</reference>